<name>YCF20_GALSU</name>
<feature type="chain" id="PRO_0000217325" description="Uncharacterized protein ycf20">
    <location>
        <begin position="1"/>
        <end position="83"/>
    </location>
</feature>
<accession>P48409</accession>
<geneLocation type="chloroplast"/>
<sequence>MQLIIINTLLGIFSSNLLCTIYTQTGDWSLYLTSCIIALYEIISYISYNQFIKKTHKNIINCFNGFKIGLIYGLYLDAFKLGS</sequence>
<evidence type="ECO:0000305" key="1"/>
<dbReference type="EMBL" id="X57251">
    <property type="protein sequence ID" value="CAA40532.1"/>
    <property type="molecule type" value="Genomic_DNA"/>
</dbReference>
<dbReference type="GO" id="GO:0009507">
    <property type="term" value="C:chloroplast"/>
    <property type="evidence" value="ECO:0007669"/>
    <property type="project" value="UniProtKB-SubCell"/>
</dbReference>
<dbReference type="InterPro" id="IPR007572">
    <property type="entry name" value="Uncharacterised_Ycf20"/>
</dbReference>
<dbReference type="PANTHER" id="PTHR33787">
    <property type="match status" value="1"/>
</dbReference>
<dbReference type="PANTHER" id="PTHR33787:SF4">
    <property type="entry name" value="YCF20-LIKE PROTEIN"/>
    <property type="match status" value="1"/>
</dbReference>
<dbReference type="Pfam" id="PF04483">
    <property type="entry name" value="DUF565"/>
    <property type="match status" value="1"/>
</dbReference>
<comment type="subcellular location">
    <subcellularLocation>
        <location>Plastid</location>
        <location>Chloroplast</location>
    </subcellularLocation>
</comment>
<comment type="miscellaneous">
    <text evidence="1">Although originally identified as Cyanidium caldarium, these sequences derive from Galdieria sulphuraria.</text>
</comment>
<comment type="similarity">
    <text evidence="1">Belongs to the ycf20 family.</text>
</comment>
<reference key="1">
    <citation type="journal article" date="1992" name="Plant Mol. Biol.">
        <title>Organization and expression of a phycobiliprotein gene cluster from the unicellular red alga Cyanidium caldarium.</title>
        <authorList>
            <person name="Valentin K.-U."/>
            <person name="Maid U."/>
            <person name="Emich A."/>
            <person name="Zetsche K."/>
        </authorList>
    </citation>
    <scope>NUCLEOTIDE SEQUENCE [GENOMIC DNA]</scope>
    <source>
        <strain>14-1-1 / Isolate 107.79/Goettingen</strain>
    </source>
</reference>
<keyword id="KW-0150">Chloroplast</keyword>
<keyword id="KW-0934">Plastid</keyword>
<organism>
    <name type="scientific">Galdieria sulphuraria</name>
    <name type="common">Red alga</name>
    <dbReference type="NCBI Taxonomy" id="130081"/>
    <lineage>
        <taxon>Eukaryota</taxon>
        <taxon>Rhodophyta</taxon>
        <taxon>Bangiophyceae</taxon>
        <taxon>Galdieriales</taxon>
        <taxon>Galdieriaceae</taxon>
        <taxon>Galdieria</taxon>
    </lineage>
</organism>
<proteinExistence type="inferred from homology"/>
<gene>
    <name type="primary">ycf20</name>
</gene>
<protein>
    <recommendedName>
        <fullName>Uncharacterized protein ycf20</fullName>
    </recommendedName>
</protein>